<gene>
    <name evidence="1" type="primary">pan2</name>
    <name type="synonym">panB</name>
    <name type="ordered locus">HVO_1957</name>
</gene>
<name>PAN2_HALVD</name>
<protein>
    <recommendedName>
        <fullName evidence="1">Proteasome-activating nucleotidase 2</fullName>
        <shortName evidence="1">PAN 2</shortName>
    </recommendedName>
    <alternativeName>
        <fullName evidence="1">Proteasomal ATPase 2</fullName>
    </alternativeName>
    <alternativeName>
        <fullName evidence="1">Proteasome regulatory ATPase 2</fullName>
    </alternativeName>
    <alternativeName>
        <fullName evidence="1">Proteasome regulatory particle 2</fullName>
    </alternativeName>
</protein>
<comment type="function">
    <text evidence="1">ATPase which is responsible for recognizing, binding, unfolding and translocation of substrate proteins into the archaeal 20S proteasome core particle. Is essential for opening the gate of the 20S proteasome via an interaction with its C-terminus, thereby allowing substrate entry and access to the site of proteolysis. Thus, the C-termini of the proteasomal ATPase function like a 'key in a lock' to induce gate opening and therefore regulate proteolysis. Unfolding activity requires energy from ATP hydrolysis, whereas ATP binding alone promotes ATPase-20S proteasome association which triggers gate opening, and supports translocation of unfolded substrates.</text>
</comment>
<comment type="subunit">
    <text evidence="1">Homohexamer. The hexameric complex has a two-ring architecture resembling a top hat that caps the 20S proteasome core at one or both ends. Upon ATP-binding, the C-terminus of PAN interacts with the alpha-rings of the proteasome core by binding to the intersubunit pockets.</text>
</comment>
<comment type="subcellular location">
    <subcellularLocation>
        <location evidence="1">Cytoplasm</location>
    </subcellularLocation>
</comment>
<comment type="induction">
    <text evidence="2">Up-regulated at mRNA and protein levels during transition from exponential to stationary phase.</text>
</comment>
<comment type="domain">
    <text evidence="1">Consists of three main regions, an N-terminal coiled-coil domain that may assist in substrate recognition, an interdomain involved in PAN hexamerization, and a C-terminal ATPase domain of the AAA type.</text>
</comment>
<comment type="disruption phenotype">
    <text evidence="3">Strains lacking panB gene alone display relatively normal growth rate and overall cell yield. Moreover, strains lackings both panA and panB still show robust growth, demonstrating that the PAN proteins are not essential.</text>
</comment>
<comment type="similarity">
    <text evidence="1">Belongs to the AAA ATPase family.</text>
</comment>
<dbReference type="EMBL" id="AY627304">
    <property type="protein sequence ID" value="AAV38127.1"/>
    <property type="molecule type" value="Genomic_DNA"/>
</dbReference>
<dbReference type="EMBL" id="CP001956">
    <property type="protein sequence ID" value="ADE04575.1"/>
    <property type="molecule type" value="Genomic_DNA"/>
</dbReference>
<dbReference type="RefSeq" id="WP_013035572.1">
    <property type="nucleotide sequence ID" value="NC_013967.1"/>
</dbReference>
<dbReference type="SMR" id="Q5UT56"/>
<dbReference type="STRING" id="309800.HVO_1957"/>
<dbReference type="PaxDb" id="309800-C498_05055"/>
<dbReference type="EnsemblBacteria" id="ADE04575">
    <property type="protein sequence ID" value="ADE04575"/>
    <property type="gene ID" value="HVO_1957"/>
</dbReference>
<dbReference type="GeneID" id="8926708"/>
<dbReference type="KEGG" id="hvo:HVO_1957"/>
<dbReference type="eggNOG" id="arCOG01306">
    <property type="taxonomic scope" value="Archaea"/>
</dbReference>
<dbReference type="HOGENOM" id="CLU_000688_2_4_2"/>
<dbReference type="OrthoDB" id="77269at2157"/>
<dbReference type="BRENDA" id="5.6.1.5">
    <property type="organism ID" value="2561"/>
</dbReference>
<dbReference type="Proteomes" id="UP000008243">
    <property type="component" value="Chromosome"/>
</dbReference>
<dbReference type="GO" id="GO:0005737">
    <property type="term" value="C:cytoplasm"/>
    <property type="evidence" value="ECO:0007669"/>
    <property type="project" value="UniProtKB-SubCell"/>
</dbReference>
<dbReference type="GO" id="GO:0022623">
    <property type="term" value="C:proteasome-activating nucleotidase complex"/>
    <property type="evidence" value="ECO:0007669"/>
    <property type="project" value="UniProtKB-UniRule"/>
</dbReference>
<dbReference type="GO" id="GO:0005524">
    <property type="term" value="F:ATP binding"/>
    <property type="evidence" value="ECO:0007669"/>
    <property type="project" value="UniProtKB-UniRule"/>
</dbReference>
<dbReference type="GO" id="GO:0016887">
    <property type="term" value="F:ATP hydrolysis activity"/>
    <property type="evidence" value="ECO:0007669"/>
    <property type="project" value="UniProtKB-UniRule"/>
</dbReference>
<dbReference type="GO" id="GO:0010498">
    <property type="term" value="P:proteasomal protein catabolic process"/>
    <property type="evidence" value="ECO:0007669"/>
    <property type="project" value="UniProtKB-UniRule"/>
</dbReference>
<dbReference type="GO" id="GO:0043335">
    <property type="term" value="P:protein unfolding"/>
    <property type="evidence" value="ECO:0007669"/>
    <property type="project" value="UniProtKB-UniRule"/>
</dbReference>
<dbReference type="FunFam" id="3.40.50.300:FF:000033">
    <property type="entry name" value="26S protease regulatory subunit 6B"/>
    <property type="match status" value="1"/>
</dbReference>
<dbReference type="Gene3D" id="1.10.8.60">
    <property type="match status" value="1"/>
</dbReference>
<dbReference type="Gene3D" id="2.40.50.140">
    <property type="entry name" value="Nucleic acid-binding proteins"/>
    <property type="match status" value="1"/>
</dbReference>
<dbReference type="Gene3D" id="3.40.50.300">
    <property type="entry name" value="P-loop containing nucleotide triphosphate hydrolases"/>
    <property type="match status" value="1"/>
</dbReference>
<dbReference type="HAMAP" id="MF_00553">
    <property type="entry name" value="PAN"/>
    <property type="match status" value="1"/>
</dbReference>
<dbReference type="InterPro" id="IPR050221">
    <property type="entry name" value="26S_Proteasome_ATPase"/>
</dbReference>
<dbReference type="InterPro" id="IPR003593">
    <property type="entry name" value="AAA+_ATPase"/>
</dbReference>
<dbReference type="InterPro" id="IPR041569">
    <property type="entry name" value="AAA_lid_3"/>
</dbReference>
<dbReference type="InterPro" id="IPR003959">
    <property type="entry name" value="ATPase_AAA_core"/>
</dbReference>
<dbReference type="InterPro" id="IPR003960">
    <property type="entry name" value="ATPase_AAA_CS"/>
</dbReference>
<dbReference type="InterPro" id="IPR012340">
    <property type="entry name" value="NA-bd_OB-fold"/>
</dbReference>
<dbReference type="InterPro" id="IPR023501">
    <property type="entry name" value="Nucleotidase_PAN"/>
</dbReference>
<dbReference type="InterPro" id="IPR027417">
    <property type="entry name" value="P-loop_NTPase"/>
</dbReference>
<dbReference type="InterPro" id="IPR032501">
    <property type="entry name" value="Prot_ATP_ID_OB_2nd"/>
</dbReference>
<dbReference type="NCBIfam" id="NF003069">
    <property type="entry name" value="PRK03992.1"/>
    <property type="match status" value="1"/>
</dbReference>
<dbReference type="NCBIfam" id="NF047747">
    <property type="entry name" value="PrtsmActNtasePan2"/>
    <property type="match status" value="1"/>
</dbReference>
<dbReference type="PANTHER" id="PTHR23073">
    <property type="entry name" value="26S PROTEASOME REGULATORY SUBUNIT"/>
    <property type="match status" value="1"/>
</dbReference>
<dbReference type="Pfam" id="PF00004">
    <property type="entry name" value="AAA"/>
    <property type="match status" value="1"/>
</dbReference>
<dbReference type="Pfam" id="PF17862">
    <property type="entry name" value="AAA_lid_3"/>
    <property type="match status" value="1"/>
</dbReference>
<dbReference type="Pfam" id="PF16450">
    <property type="entry name" value="Prot_ATP_ID_OB_C"/>
    <property type="match status" value="1"/>
</dbReference>
<dbReference type="SMART" id="SM00382">
    <property type="entry name" value="AAA"/>
    <property type="match status" value="1"/>
</dbReference>
<dbReference type="SUPFAM" id="SSF52540">
    <property type="entry name" value="P-loop containing nucleoside triphosphate hydrolases"/>
    <property type="match status" value="1"/>
</dbReference>
<dbReference type="PROSITE" id="PS00674">
    <property type="entry name" value="AAA"/>
    <property type="match status" value="1"/>
</dbReference>
<sequence>MSRSPSLPERPHLDLDPEMSDAERLSALRQHFERMVDVNRELDQRLQNADDRHAELVDEVDQMKARNEALKTASYYIATVEELTDDGVIIKQHGNNQEVLTEFAPSLNIDDIEPGDRVAINDSFAVQTVLDDETDARAQAMEVVESPTVTYDDIGGIDEQVREVREAVEQPLENPEMFAEVGIDPPSGVLLYGPPGTGKTMLAKAVANETNASFIKMAGSELVQKFIGEGARLVRDLFKLAAEREPVVVFIDEIDAVASKRTDSKTSGDAEVQRTMMQLLSEMDGFDDRGDIRIIAATNRFDMLDEAILRPGRFDRLIEVPKPAVEGRRHILDIHTRDMNVADDVDLDALAEELDDYSGADIASLTTEAGMFAIRDGRTEVTGADFDAAHEKLSNVDESGTGPISGFTDYQY</sequence>
<reference key="1">
    <citation type="journal article" date="2004" name="J. Bacteriol.">
        <title>Differential regulation of the PanA and PanB proteasome-activating nucleotidase and 20S proteasomal proteins of the haloarchaeon Haloferax volcanii.</title>
        <authorList>
            <person name="Reuter C.J."/>
            <person name="Kaczowka S.J."/>
            <person name="Maupin-Furlow J.A."/>
        </authorList>
    </citation>
    <scope>NUCLEOTIDE SEQUENCE [GENOMIC DNA]</scope>
    <scope>INDUCTION</scope>
</reference>
<reference key="2">
    <citation type="journal article" date="2010" name="PLoS ONE">
        <title>The complete genome sequence of Haloferax volcanii DS2, a model archaeon.</title>
        <authorList>
            <person name="Hartman A.L."/>
            <person name="Norais C."/>
            <person name="Badger J.H."/>
            <person name="Delmas S."/>
            <person name="Haldenby S."/>
            <person name="Madupu R."/>
            <person name="Robinson J."/>
            <person name="Khouri H."/>
            <person name="Ren Q."/>
            <person name="Lowe T.M."/>
            <person name="Maupin-Furlow J."/>
            <person name="Pohlschroder M."/>
            <person name="Daniels C."/>
            <person name="Pfeiffer F."/>
            <person name="Allers T."/>
            <person name="Eisen J.A."/>
        </authorList>
    </citation>
    <scope>NUCLEOTIDE SEQUENCE [LARGE SCALE GENOMIC DNA]</scope>
    <source>
        <strain>ATCC 29605 / DSM 3757 / JCM 8879 / NBRC 14742 / NCIMB 2012 / VKM B-1768 / DS2</strain>
    </source>
</reference>
<reference key="3">
    <citation type="journal article" date="2008" name="J. Bacteriol.">
        <title>Proteasomal components required for cell growth and stress responses in the haloarchaeon Haloferax volcanii.</title>
        <authorList>
            <person name="Zhou G."/>
            <person name="Kowalczyk D."/>
            <person name="Humbard M.A."/>
            <person name="Rohatgi S."/>
            <person name="Maupin-Furlow J.A."/>
        </authorList>
    </citation>
    <scope>DISRUPTION PHENOTYPE</scope>
</reference>
<accession>Q5UT56</accession>
<evidence type="ECO:0000255" key="1">
    <source>
        <dbReference type="HAMAP-Rule" id="MF_00553"/>
    </source>
</evidence>
<evidence type="ECO:0000269" key="2">
    <source>
    </source>
</evidence>
<evidence type="ECO:0000269" key="3">
    <source>
    </source>
</evidence>
<organism>
    <name type="scientific">Haloferax volcanii (strain ATCC 29605 / DSM 3757 / JCM 8879 / NBRC 14742 / NCIMB 2012 / VKM B-1768 / DS2)</name>
    <name type="common">Halobacterium volcanii</name>
    <dbReference type="NCBI Taxonomy" id="309800"/>
    <lineage>
        <taxon>Archaea</taxon>
        <taxon>Methanobacteriati</taxon>
        <taxon>Methanobacteriota</taxon>
        <taxon>Stenosarchaea group</taxon>
        <taxon>Halobacteria</taxon>
        <taxon>Halobacteriales</taxon>
        <taxon>Haloferacaceae</taxon>
        <taxon>Haloferax</taxon>
    </lineage>
</organism>
<proteinExistence type="evidence at transcript level"/>
<feature type="chain" id="PRO_0000397031" description="Proteasome-activating nucleotidase 2">
    <location>
        <begin position="1"/>
        <end position="412"/>
    </location>
</feature>
<feature type="region of interest" description="Docks into pockets in the proteasome alpha-ring to cause gate opening" evidence="1">
    <location>
        <begin position="409"/>
        <end position="412"/>
    </location>
</feature>
<feature type="coiled-coil region" evidence="1">
    <location>
        <begin position="28"/>
        <end position="74"/>
    </location>
</feature>
<feature type="binding site" evidence="1">
    <location>
        <begin position="196"/>
        <end position="201"/>
    </location>
    <ligand>
        <name>ATP</name>
        <dbReference type="ChEBI" id="CHEBI:30616"/>
    </ligand>
</feature>
<feature type="binding site" evidence="1">
    <location>
        <position position="335"/>
    </location>
    <ligand>
        <name>ATP</name>
        <dbReference type="ChEBI" id="CHEBI:30616"/>
    </ligand>
</feature>
<keyword id="KW-0067">ATP-binding</keyword>
<keyword id="KW-0143">Chaperone</keyword>
<keyword id="KW-0175">Coiled coil</keyword>
<keyword id="KW-0963">Cytoplasm</keyword>
<keyword id="KW-0547">Nucleotide-binding</keyword>
<keyword id="KW-0647">Proteasome</keyword>
<keyword id="KW-1185">Reference proteome</keyword>